<accession>Q3A9S8</accession>
<comment type="function">
    <text evidence="1">This is one of the proteins that bind and probably mediate the attachment of the 5S RNA into the large ribosomal subunit, where it forms part of the central protuberance. In the 70S ribosome it contacts protein S13 of the 30S subunit (bridge B1b), connecting the 2 subunits; this bridge is implicated in subunit movement. Contacts the P site tRNA; the 5S rRNA and some of its associated proteins might help stabilize positioning of ribosome-bound tRNAs.</text>
</comment>
<comment type="subunit">
    <text evidence="1">Part of the 50S ribosomal subunit; part of the 5S rRNA/L5/L18/L25 subcomplex. Contacts the 5S rRNA and the P site tRNA. Forms a bridge to the 30S subunit in the 70S ribosome.</text>
</comment>
<comment type="similarity">
    <text evidence="1">Belongs to the universal ribosomal protein uL5 family.</text>
</comment>
<feature type="chain" id="PRO_0000242984" description="Large ribosomal subunit protein uL5">
    <location>
        <begin position="1"/>
        <end position="179"/>
    </location>
</feature>
<name>RL5_CARHZ</name>
<sequence length="179" mass="20261">MPRLKDKYQNDVIPAMMEKFGYKNKMQVPKLEKIVINIGLGEALQNPKAVDAAVADLMAITGQRPVLTKAKKSVAGFRVRQGATIGVKVTLRGDRMYEFMDKFVNIVLPRVRDFRGLSPKSFDGRGNYSVGLREQLIFPEIDYDKIDKVRGMEVTFVTTAKTDEEARELLQLMGMPFSR</sequence>
<keyword id="KW-1185">Reference proteome</keyword>
<keyword id="KW-0687">Ribonucleoprotein</keyword>
<keyword id="KW-0689">Ribosomal protein</keyword>
<keyword id="KW-0694">RNA-binding</keyword>
<keyword id="KW-0699">rRNA-binding</keyword>
<keyword id="KW-0820">tRNA-binding</keyword>
<proteinExistence type="inferred from homology"/>
<reference key="1">
    <citation type="journal article" date="2005" name="PLoS Genet.">
        <title>Life in hot carbon monoxide: the complete genome sequence of Carboxydothermus hydrogenoformans Z-2901.</title>
        <authorList>
            <person name="Wu M."/>
            <person name="Ren Q."/>
            <person name="Durkin A.S."/>
            <person name="Daugherty S.C."/>
            <person name="Brinkac L.M."/>
            <person name="Dodson R.J."/>
            <person name="Madupu R."/>
            <person name="Sullivan S.A."/>
            <person name="Kolonay J.F."/>
            <person name="Nelson W.C."/>
            <person name="Tallon L.J."/>
            <person name="Jones K.M."/>
            <person name="Ulrich L.E."/>
            <person name="Gonzalez J.M."/>
            <person name="Zhulin I.B."/>
            <person name="Robb F.T."/>
            <person name="Eisen J.A."/>
        </authorList>
    </citation>
    <scope>NUCLEOTIDE SEQUENCE [LARGE SCALE GENOMIC DNA]</scope>
    <source>
        <strain>ATCC BAA-161 / DSM 6008 / Z-2901</strain>
    </source>
</reference>
<gene>
    <name evidence="1" type="primary">rplE</name>
    <name type="ordered locus">CHY_2297</name>
</gene>
<organism>
    <name type="scientific">Carboxydothermus hydrogenoformans (strain ATCC BAA-161 / DSM 6008 / Z-2901)</name>
    <dbReference type="NCBI Taxonomy" id="246194"/>
    <lineage>
        <taxon>Bacteria</taxon>
        <taxon>Bacillati</taxon>
        <taxon>Bacillota</taxon>
        <taxon>Clostridia</taxon>
        <taxon>Thermoanaerobacterales</taxon>
        <taxon>Thermoanaerobacteraceae</taxon>
        <taxon>Carboxydothermus</taxon>
    </lineage>
</organism>
<evidence type="ECO:0000255" key="1">
    <source>
        <dbReference type="HAMAP-Rule" id="MF_01333"/>
    </source>
</evidence>
<evidence type="ECO:0000305" key="2"/>
<dbReference type="EMBL" id="CP000141">
    <property type="protein sequence ID" value="ABB14666.1"/>
    <property type="molecule type" value="Genomic_DNA"/>
</dbReference>
<dbReference type="RefSeq" id="WP_011345179.1">
    <property type="nucleotide sequence ID" value="NC_007503.1"/>
</dbReference>
<dbReference type="SMR" id="Q3A9S8"/>
<dbReference type="FunCoup" id="Q3A9S8">
    <property type="interactions" value="436"/>
</dbReference>
<dbReference type="STRING" id="246194.CHY_2297"/>
<dbReference type="KEGG" id="chy:CHY_2297"/>
<dbReference type="eggNOG" id="COG0094">
    <property type="taxonomic scope" value="Bacteria"/>
</dbReference>
<dbReference type="HOGENOM" id="CLU_061015_2_1_9"/>
<dbReference type="InParanoid" id="Q3A9S8"/>
<dbReference type="OrthoDB" id="9806626at2"/>
<dbReference type="Proteomes" id="UP000002706">
    <property type="component" value="Chromosome"/>
</dbReference>
<dbReference type="GO" id="GO:1990904">
    <property type="term" value="C:ribonucleoprotein complex"/>
    <property type="evidence" value="ECO:0007669"/>
    <property type="project" value="UniProtKB-KW"/>
</dbReference>
<dbReference type="GO" id="GO:0005840">
    <property type="term" value="C:ribosome"/>
    <property type="evidence" value="ECO:0007669"/>
    <property type="project" value="UniProtKB-KW"/>
</dbReference>
<dbReference type="GO" id="GO:0019843">
    <property type="term" value="F:rRNA binding"/>
    <property type="evidence" value="ECO:0007669"/>
    <property type="project" value="UniProtKB-UniRule"/>
</dbReference>
<dbReference type="GO" id="GO:0003735">
    <property type="term" value="F:structural constituent of ribosome"/>
    <property type="evidence" value="ECO:0007669"/>
    <property type="project" value="InterPro"/>
</dbReference>
<dbReference type="GO" id="GO:0000049">
    <property type="term" value="F:tRNA binding"/>
    <property type="evidence" value="ECO:0007669"/>
    <property type="project" value="UniProtKB-UniRule"/>
</dbReference>
<dbReference type="GO" id="GO:0006412">
    <property type="term" value="P:translation"/>
    <property type="evidence" value="ECO:0007669"/>
    <property type="project" value="UniProtKB-UniRule"/>
</dbReference>
<dbReference type="FunFam" id="3.30.1440.10:FF:000001">
    <property type="entry name" value="50S ribosomal protein L5"/>
    <property type="match status" value="1"/>
</dbReference>
<dbReference type="Gene3D" id="3.30.1440.10">
    <property type="match status" value="1"/>
</dbReference>
<dbReference type="HAMAP" id="MF_01333_B">
    <property type="entry name" value="Ribosomal_uL5_B"/>
    <property type="match status" value="1"/>
</dbReference>
<dbReference type="InterPro" id="IPR002132">
    <property type="entry name" value="Ribosomal_uL5"/>
</dbReference>
<dbReference type="InterPro" id="IPR020930">
    <property type="entry name" value="Ribosomal_uL5_bac-type"/>
</dbReference>
<dbReference type="InterPro" id="IPR031309">
    <property type="entry name" value="Ribosomal_uL5_C"/>
</dbReference>
<dbReference type="InterPro" id="IPR020929">
    <property type="entry name" value="Ribosomal_uL5_CS"/>
</dbReference>
<dbReference type="InterPro" id="IPR022803">
    <property type="entry name" value="Ribosomal_uL5_dom_sf"/>
</dbReference>
<dbReference type="InterPro" id="IPR031310">
    <property type="entry name" value="Ribosomal_uL5_N"/>
</dbReference>
<dbReference type="NCBIfam" id="NF000585">
    <property type="entry name" value="PRK00010.1"/>
    <property type="match status" value="1"/>
</dbReference>
<dbReference type="PANTHER" id="PTHR11994">
    <property type="entry name" value="60S RIBOSOMAL PROTEIN L11-RELATED"/>
    <property type="match status" value="1"/>
</dbReference>
<dbReference type="Pfam" id="PF00281">
    <property type="entry name" value="Ribosomal_L5"/>
    <property type="match status" value="1"/>
</dbReference>
<dbReference type="Pfam" id="PF00673">
    <property type="entry name" value="Ribosomal_L5_C"/>
    <property type="match status" value="1"/>
</dbReference>
<dbReference type="PIRSF" id="PIRSF002161">
    <property type="entry name" value="Ribosomal_L5"/>
    <property type="match status" value="1"/>
</dbReference>
<dbReference type="SUPFAM" id="SSF55282">
    <property type="entry name" value="RL5-like"/>
    <property type="match status" value="1"/>
</dbReference>
<dbReference type="PROSITE" id="PS00358">
    <property type="entry name" value="RIBOSOMAL_L5"/>
    <property type="match status" value="1"/>
</dbReference>
<protein>
    <recommendedName>
        <fullName evidence="1">Large ribosomal subunit protein uL5</fullName>
    </recommendedName>
    <alternativeName>
        <fullName evidence="2">50S ribosomal protein L5</fullName>
    </alternativeName>
</protein>